<comment type="subunit">
    <text evidence="1">Part of the 50S ribosomal subunit.</text>
</comment>
<comment type="similarity">
    <text evidence="1">Belongs to the universal ribosomal protein uL30 family.</text>
</comment>
<protein>
    <recommendedName>
        <fullName evidence="1">Large ribosomal subunit protein uL30</fullName>
    </recommendedName>
    <alternativeName>
        <fullName evidence="2">50S ribosomal protein L30</fullName>
    </alternativeName>
</protein>
<organism>
    <name type="scientific">Staphylococcus carnosus (strain TM300)</name>
    <dbReference type="NCBI Taxonomy" id="396513"/>
    <lineage>
        <taxon>Bacteria</taxon>
        <taxon>Bacillati</taxon>
        <taxon>Bacillota</taxon>
        <taxon>Bacilli</taxon>
        <taxon>Bacillales</taxon>
        <taxon>Staphylococcaceae</taxon>
        <taxon>Staphylococcus</taxon>
    </lineage>
</organism>
<feature type="chain" id="PRO_1000184159" description="Large ribosomal subunit protein uL30">
    <location>
        <begin position="1"/>
        <end position="62"/>
    </location>
</feature>
<keyword id="KW-1185">Reference proteome</keyword>
<keyword id="KW-0687">Ribonucleoprotein</keyword>
<keyword id="KW-0689">Ribosomal protein</keyword>
<dbReference type="EMBL" id="AM295250">
    <property type="protein sequence ID" value="CAL28623.1"/>
    <property type="molecule type" value="Genomic_DNA"/>
</dbReference>
<dbReference type="RefSeq" id="WP_015900961.1">
    <property type="nucleotide sequence ID" value="NC_012121.1"/>
</dbReference>
<dbReference type="SMR" id="B9DM29"/>
<dbReference type="GeneID" id="93794176"/>
<dbReference type="KEGG" id="sca:SCA_1717"/>
<dbReference type="eggNOG" id="COG1841">
    <property type="taxonomic scope" value="Bacteria"/>
</dbReference>
<dbReference type="HOGENOM" id="CLU_131047_2_1_9"/>
<dbReference type="OrthoDB" id="9812790at2"/>
<dbReference type="BioCyc" id="SCAR396513:SCA_RS08750-MONOMER"/>
<dbReference type="Proteomes" id="UP000000444">
    <property type="component" value="Chromosome"/>
</dbReference>
<dbReference type="GO" id="GO:0022625">
    <property type="term" value="C:cytosolic large ribosomal subunit"/>
    <property type="evidence" value="ECO:0007669"/>
    <property type="project" value="TreeGrafter"/>
</dbReference>
<dbReference type="GO" id="GO:0003735">
    <property type="term" value="F:structural constituent of ribosome"/>
    <property type="evidence" value="ECO:0007669"/>
    <property type="project" value="InterPro"/>
</dbReference>
<dbReference type="GO" id="GO:0006412">
    <property type="term" value="P:translation"/>
    <property type="evidence" value="ECO:0007669"/>
    <property type="project" value="UniProtKB-UniRule"/>
</dbReference>
<dbReference type="CDD" id="cd01658">
    <property type="entry name" value="Ribosomal_L30"/>
    <property type="match status" value="1"/>
</dbReference>
<dbReference type="FunFam" id="3.30.1390.20:FF:000001">
    <property type="entry name" value="50S ribosomal protein L30"/>
    <property type="match status" value="1"/>
</dbReference>
<dbReference type="Gene3D" id="3.30.1390.20">
    <property type="entry name" value="Ribosomal protein L30, ferredoxin-like fold domain"/>
    <property type="match status" value="1"/>
</dbReference>
<dbReference type="HAMAP" id="MF_01371_B">
    <property type="entry name" value="Ribosomal_uL30_B"/>
    <property type="match status" value="1"/>
</dbReference>
<dbReference type="InterPro" id="IPR036919">
    <property type="entry name" value="Ribo_uL30_ferredoxin-like_sf"/>
</dbReference>
<dbReference type="InterPro" id="IPR005996">
    <property type="entry name" value="Ribosomal_uL30_bac-type"/>
</dbReference>
<dbReference type="InterPro" id="IPR016082">
    <property type="entry name" value="Ribosomal_uL30_ferredoxin-like"/>
</dbReference>
<dbReference type="NCBIfam" id="TIGR01308">
    <property type="entry name" value="rpmD_bact"/>
    <property type="match status" value="1"/>
</dbReference>
<dbReference type="PANTHER" id="PTHR15892:SF2">
    <property type="entry name" value="LARGE RIBOSOMAL SUBUNIT PROTEIN UL30M"/>
    <property type="match status" value="1"/>
</dbReference>
<dbReference type="PANTHER" id="PTHR15892">
    <property type="entry name" value="MITOCHONDRIAL RIBOSOMAL PROTEIN L30"/>
    <property type="match status" value="1"/>
</dbReference>
<dbReference type="Pfam" id="PF00327">
    <property type="entry name" value="Ribosomal_L30"/>
    <property type="match status" value="1"/>
</dbReference>
<dbReference type="PIRSF" id="PIRSF002211">
    <property type="entry name" value="Ribosomal_L30_bac-type"/>
    <property type="match status" value="1"/>
</dbReference>
<dbReference type="SUPFAM" id="SSF55129">
    <property type="entry name" value="Ribosomal protein L30p/L7e"/>
    <property type="match status" value="1"/>
</dbReference>
<proteinExistence type="inferred from homology"/>
<sequence>MAKLQVTLTRSVIGRPETQRKTVEALGLKKTNSSVVLEDNVANRGQINKVSHLVTVEEVDAK</sequence>
<accession>B9DM29</accession>
<name>RL30_STACT</name>
<evidence type="ECO:0000255" key="1">
    <source>
        <dbReference type="HAMAP-Rule" id="MF_01371"/>
    </source>
</evidence>
<evidence type="ECO:0000305" key="2"/>
<reference key="1">
    <citation type="journal article" date="2009" name="Appl. Environ. Microbiol.">
        <title>Genome analysis of the meat starter culture bacterium Staphylococcus carnosus TM300.</title>
        <authorList>
            <person name="Rosenstein R."/>
            <person name="Nerz C."/>
            <person name="Biswas L."/>
            <person name="Resch A."/>
            <person name="Raddatz G."/>
            <person name="Schuster S.C."/>
            <person name="Goetz F."/>
        </authorList>
    </citation>
    <scope>NUCLEOTIDE SEQUENCE [LARGE SCALE GENOMIC DNA]</scope>
    <source>
        <strain>TM300</strain>
    </source>
</reference>
<gene>
    <name evidence="1" type="primary">rpmD</name>
    <name type="ordered locus">Sca_1717</name>
</gene>